<evidence type="ECO:0000255" key="1">
    <source>
        <dbReference type="HAMAP-Rule" id="MF_00147"/>
    </source>
</evidence>
<organism>
    <name type="scientific">Bacillus cereus (strain ATCC 10987 / NRS 248)</name>
    <dbReference type="NCBI Taxonomy" id="222523"/>
    <lineage>
        <taxon>Bacteria</taxon>
        <taxon>Bacillati</taxon>
        <taxon>Bacillota</taxon>
        <taxon>Bacilli</taxon>
        <taxon>Bacillales</taxon>
        <taxon>Bacillaceae</taxon>
        <taxon>Bacillus</taxon>
        <taxon>Bacillus cereus group</taxon>
    </lineage>
</organism>
<protein>
    <recommendedName>
        <fullName evidence="1">Triosephosphate isomerase</fullName>
        <shortName evidence="1">TIM</shortName>
        <shortName evidence="1">TPI</shortName>
        <ecNumber evidence="1">5.3.1.1</ecNumber>
    </recommendedName>
    <alternativeName>
        <fullName evidence="1">Triose-phosphate isomerase</fullName>
    </alternativeName>
</protein>
<dbReference type="EC" id="5.3.1.1" evidence="1"/>
<dbReference type="EMBL" id="AE017194">
    <property type="protein sequence ID" value="AAS44141.1"/>
    <property type="molecule type" value="Genomic_DNA"/>
</dbReference>
<dbReference type="SMR" id="Q72XY3"/>
<dbReference type="KEGG" id="bca:BCE_5240"/>
<dbReference type="HOGENOM" id="CLU_024251_2_3_9"/>
<dbReference type="UniPathway" id="UPA00109">
    <property type="reaction ID" value="UER00189"/>
</dbReference>
<dbReference type="UniPathway" id="UPA00138"/>
<dbReference type="Proteomes" id="UP000002527">
    <property type="component" value="Chromosome"/>
</dbReference>
<dbReference type="GO" id="GO:0005829">
    <property type="term" value="C:cytosol"/>
    <property type="evidence" value="ECO:0007669"/>
    <property type="project" value="TreeGrafter"/>
</dbReference>
<dbReference type="GO" id="GO:0004807">
    <property type="term" value="F:triose-phosphate isomerase activity"/>
    <property type="evidence" value="ECO:0007669"/>
    <property type="project" value="UniProtKB-UniRule"/>
</dbReference>
<dbReference type="GO" id="GO:0006094">
    <property type="term" value="P:gluconeogenesis"/>
    <property type="evidence" value="ECO:0007669"/>
    <property type="project" value="UniProtKB-UniRule"/>
</dbReference>
<dbReference type="GO" id="GO:0046166">
    <property type="term" value="P:glyceraldehyde-3-phosphate biosynthetic process"/>
    <property type="evidence" value="ECO:0007669"/>
    <property type="project" value="TreeGrafter"/>
</dbReference>
<dbReference type="GO" id="GO:0019563">
    <property type="term" value="P:glycerol catabolic process"/>
    <property type="evidence" value="ECO:0007669"/>
    <property type="project" value="TreeGrafter"/>
</dbReference>
<dbReference type="GO" id="GO:0006096">
    <property type="term" value="P:glycolytic process"/>
    <property type="evidence" value="ECO:0007669"/>
    <property type="project" value="UniProtKB-UniRule"/>
</dbReference>
<dbReference type="CDD" id="cd00311">
    <property type="entry name" value="TIM"/>
    <property type="match status" value="1"/>
</dbReference>
<dbReference type="FunFam" id="3.20.20.70:FF:000016">
    <property type="entry name" value="Triosephosphate isomerase"/>
    <property type="match status" value="1"/>
</dbReference>
<dbReference type="Gene3D" id="3.20.20.70">
    <property type="entry name" value="Aldolase class I"/>
    <property type="match status" value="1"/>
</dbReference>
<dbReference type="HAMAP" id="MF_00147_B">
    <property type="entry name" value="TIM_B"/>
    <property type="match status" value="1"/>
</dbReference>
<dbReference type="InterPro" id="IPR013785">
    <property type="entry name" value="Aldolase_TIM"/>
</dbReference>
<dbReference type="InterPro" id="IPR035990">
    <property type="entry name" value="TIM_sf"/>
</dbReference>
<dbReference type="InterPro" id="IPR022896">
    <property type="entry name" value="TrioseP_Isoase_bac/euk"/>
</dbReference>
<dbReference type="InterPro" id="IPR000652">
    <property type="entry name" value="Triosephosphate_isomerase"/>
</dbReference>
<dbReference type="InterPro" id="IPR020861">
    <property type="entry name" value="Triosephosphate_isomerase_AS"/>
</dbReference>
<dbReference type="NCBIfam" id="TIGR00419">
    <property type="entry name" value="tim"/>
    <property type="match status" value="1"/>
</dbReference>
<dbReference type="PANTHER" id="PTHR21139">
    <property type="entry name" value="TRIOSEPHOSPHATE ISOMERASE"/>
    <property type="match status" value="1"/>
</dbReference>
<dbReference type="PANTHER" id="PTHR21139:SF42">
    <property type="entry name" value="TRIOSEPHOSPHATE ISOMERASE"/>
    <property type="match status" value="1"/>
</dbReference>
<dbReference type="Pfam" id="PF00121">
    <property type="entry name" value="TIM"/>
    <property type="match status" value="1"/>
</dbReference>
<dbReference type="SUPFAM" id="SSF51351">
    <property type="entry name" value="Triosephosphate isomerase (TIM)"/>
    <property type="match status" value="1"/>
</dbReference>
<dbReference type="PROSITE" id="PS00171">
    <property type="entry name" value="TIM_1"/>
    <property type="match status" value="1"/>
</dbReference>
<dbReference type="PROSITE" id="PS51440">
    <property type="entry name" value="TIM_2"/>
    <property type="match status" value="1"/>
</dbReference>
<proteinExistence type="inferred from homology"/>
<gene>
    <name evidence="1" type="primary">tpiA</name>
    <name type="ordered locus">BCE_5240</name>
</gene>
<name>TPIS_BACC1</name>
<feature type="chain" id="PRO_0000307425" description="Triosephosphate isomerase">
    <location>
        <begin position="1"/>
        <end position="251"/>
    </location>
</feature>
<feature type="active site" description="Electrophile" evidence="1">
    <location>
        <position position="95"/>
    </location>
</feature>
<feature type="active site" description="Proton acceptor" evidence="1">
    <location>
        <position position="167"/>
    </location>
</feature>
<feature type="binding site" evidence="1">
    <location>
        <begin position="9"/>
        <end position="11"/>
    </location>
    <ligand>
        <name>substrate</name>
    </ligand>
</feature>
<feature type="binding site" evidence="1">
    <location>
        <position position="173"/>
    </location>
    <ligand>
        <name>substrate</name>
    </ligand>
</feature>
<feature type="binding site" evidence="1">
    <location>
        <position position="213"/>
    </location>
    <ligand>
        <name>substrate</name>
    </ligand>
</feature>
<feature type="binding site" evidence="1">
    <location>
        <begin position="234"/>
        <end position="235"/>
    </location>
    <ligand>
        <name>substrate</name>
    </ligand>
</feature>
<feature type="modified residue" description="Phosphoserine" evidence="1">
    <location>
        <position position="213"/>
    </location>
</feature>
<reference key="1">
    <citation type="journal article" date="2004" name="Nucleic Acids Res.">
        <title>The genome sequence of Bacillus cereus ATCC 10987 reveals metabolic adaptations and a large plasmid related to Bacillus anthracis pXO1.</title>
        <authorList>
            <person name="Rasko D.A."/>
            <person name="Ravel J."/>
            <person name="Oekstad O.A."/>
            <person name="Helgason E."/>
            <person name="Cer R.Z."/>
            <person name="Jiang L."/>
            <person name="Shores K.A."/>
            <person name="Fouts D.E."/>
            <person name="Tourasse N.J."/>
            <person name="Angiuoli S.V."/>
            <person name="Kolonay J.F."/>
            <person name="Nelson W.C."/>
            <person name="Kolstoe A.-B."/>
            <person name="Fraser C.M."/>
            <person name="Read T.D."/>
        </authorList>
    </citation>
    <scope>NUCLEOTIDE SEQUENCE [LARGE SCALE GENOMIC DNA]</scope>
    <source>
        <strain>ATCC 10987 / NRS 248</strain>
    </source>
</reference>
<keyword id="KW-0963">Cytoplasm</keyword>
<keyword id="KW-0312">Gluconeogenesis</keyword>
<keyword id="KW-0324">Glycolysis</keyword>
<keyword id="KW-0413">Isomerase</keyword>
<keyword id="KW-0597">Phosphoprotein</keyword>
<comment type="function">
    <text evidence="1">Involved in the gluconeogenesis. Catalyzes stereospecifically the conversion of dihydroxyacetone phosphate (DHAP) to D-glyceraldehyde-3-phosphate (G3P).</text>
</comment>
<comment type="catalytic activity">
    <reaction evidence="1">
        <text>D-glyceraldehyde 3-phosphate = dihydroxyacetone phosphate</text>
        <dbReference type="Rhea" id="RHEA:18585"/>
        <dbReference type="ChEBI" id="CHEBI:57642"/>
        <dbReference type="ChEBI" id="CHEBI:59776"/>
        <dbReference type="EC" id="5.3.1.1"/>
    </reaction>
</comment>
<comment type="pathway">
    <text evidence="1">Carbohydrate biosynthesis; gluconeogenesis.</text>
</comment>
<comment type="pathway">
    <text evidence="1">Carbohydrate degradation; glycolysis; D-glyceraldehyde 3-phosphate from glycerone phosphate: step 1/1.</text>
</comment>
<comment type="subunit">
    <text evidence="1">Homodimer.</text>
</comment>
<comment type="subcellular location">
    <subcellularLocation>
        <location evidence="1">Cytoplasm</location>
    </subcellularLocation>
</comment>
<comment type="similarity">
    <text evidence="1">Belongs to the triosephosphate isomerase family.</text>
</comment>
<accession>Q72XY3</accession>
<sequence length="251" mass="26482">MRKPIIAGNWKMNKTLSEAVSFVEEVKGQIPAASAVDAVVCSPALFLERLVAATEGTDLQVGAQNMHFEKNGAFTGEISPVALSDLKVGYVVLGHSERREMFAETDESVNKKTIAAFEHGLTPIVCCGETLEERESGKTFDLVAGQVTKALAGLTEEQVKATVIAYEPIWAIGTGKSSSSADANEVCAHIRKVVAEAVSPAAAEAVRIQYGGSVKPENIKEYMAQSDIDGALVGGASLEPASFLGLLEAVK</sequence>